<name>STAG2_MOUSE</name>
<protein>
    <recommendedName>
        <fullName>Cohesin subunit SA-2</fullName>
    </recommendedName>
    <alternativeName>
        <fullName>SCC3 homolog 2</fullName>
    </alternativeName>
    <alternativeName>
        <fullName>Stromal antigen 2</fullName>
    </alternativeName>
</protein>
<organism>
    <name type="scientific">Mus musculus</name>
    <name type="common">Mouse</name>
    <dbReference type="NCBI Taxonomy" id="10090"/>
    <lineage>
        <taxon>Eukaryota</taxon>
        <taxon>Metazoa</taxon>
        <taxon>Chordata</taxon>
        <taxon>Craniata</taxon>
        <taxon>Vertebrata</taxon>
        <taxon>Euteleostomi</taxon>
        <taxon>Mammalia</taxon>
        <taxon>Eutheria</taxon>
        <taxon>Euarchontoglires</taxon>
        <taxon>Glires</taxon>
        <taxon>Rodentia</taxon>
        <taxon>Myomorpha</taxon>
        <taxon>Muroidea</taxon>
        <taxon>Muridae</taxon>
        <taxon>Murinae</taxon>
        <taxon>Mus</taxon>
        <taxon>Mus</taxon>
    </lineage>
</organism>
<keyword id="KW-0007">Acetylation</keyword>
<keyword id="KW-0131">Cell cycle</keyword>
<keyword id="KW-0132">Cell division</keyword>
<keyword id="KW-0137">Centromere</keyword>
<keyword id="KW-0158">Chromosome</keyword>
<keyword id="KW-0159">Chromosome partition</keyword>
<keyword id="KW-0469">Meiosis</keyword>
<keyword id="KW-0498">Mitosis</keyword>
<keyword id="KW-0539">Nucleus</keyword>
<keyword id="KW-0597">Phosphoprotein</keyword>
<keyword id="KW-1185">Reference proteome</keyword>
<gene>
    <name type="primary">Stag2</name>
    <name type="synonym">Sa2</name>
    <name type="synonym">Sap2</name>
</gene>
<dbReference type="EMBL" id="AJ002636">
    <property type="protein sequence ID" value="CAA05638.1"/>
    <property type="status" value="ALT_FRAME"/>
    <property type="molecule type" value="mRNA"/>
</dbReference>
<dbReference type="EMBL" id="AL672089">
    <property type="status" value="NOT_ANNOTATED_CDS"/>
    <property type="molecule type" value="Genomic_DNA"/>
</dbReference>
<dbReference type="EMBL" id="BC066041">
    <property type="status" value="NOT_ANNOTATED_CDS"/>
    <property type="molecule type" value="mRNA"/>
</dbReference>
<dbReference type="CCDS" id="CCDS40952.1"/>
<dbReference type="PIR" id="T30194">
    <property type="entry name" value="T30194"/>
</dbReference>
<dbReference type="RefSeq" id="NP_001071180.1">
    <property type="nucleotide sequence ID" value="NM_001077712.2"/>
</dbReference>
<dbReference type="RefSeq" id="NP_001345154.1">
    <property type="nucleotide sequence ID" value="NM_001358225.1"/>
</dbReference>
<dbReference type="RefSeq" id="NP_067440.3">
    <property type="nucleotide sequence ID" value="NM_021465.4"/>
</dbReference>
<dbReference type="RefSeq" id="XP_011249291.1">
    <property type="nucleotide sequence ID" value="XM_011250989.4"/>
</dbReference>
<dbReference type="RefSeq" id="XP_017173935.1">
    <property type="nucleotide sequence ID" value="XM_017318446.1"/>
</dbReference>
<dbReference type="RefSeq" id="XP_036017766.1">
    <property type="nucleotide sequence ID" value="XM_036161873.1"/>
</dbReference>
<dbReference type="RefSeq" id="XP_036017767.1">
    <property type="nucleotide sequence ID" value="XM_036161874.1"/>
</dbReference>
<dbReference type="RefSeq" id="XP_036017768.1">
    <property type="nucleotide sequence ID" value="XM_036161875.1"/>
</dbReference>
<dbReference type="RefSeq" id="XP_036017769.1">
    <property type="nucleotide sequence ID" value="XM_036161876.1"/>
</dbReference>
<dbReference type="RefSeq" id="XP_036017770.1">
    <property type="nucleotide sequence ID" value="XM_036161877.1"/>
</dbReference>
<dbReference type="RefSeq" id="XP_036017771.1">
    <property type="nucleotide sequence ID" value="XM_036161878.1"/>
</dbReference>
<dbReference type="SMR" id="O35638"/>
<dbReference type="BioGRID" id="203518">
    <property type="interactions" value="19"/>
</dbReference>
<dbReference type="DIP" id="DIP-56691N"/>
<dbReference type="FunCoup" id="O35638">
    <property type="interactions" value="4467"/>
</dbReference>
<dbReference type="IntAct" id="O35638">
    <property type="interactions" value="19"/>
</dbReference>
<dbReference type="MINT" id="O35638"/>
<dbReference type="STRING" id="10090.ENSMUSP00000110725"/>
<dbReference type="iPTMnet" id="O35638"/>
<dbReference type="PhosphoSitePlus" id="O35638"/>
<dbReference type="jPOST" id="O35638"/>
<dbReference type="PaxDb" id="10090-ENSMUSP00000063250"/>
<dbReference type="PeptideAtlas" id="O35638"/>
<dbReference type="ProteomicsDB" id="258654"/>
<dbReference type="Pumba" id="O35638"/>
<dbReference type="Antibodypedia" id="500">
    <property type="antibodies" value="319 antibodies from 36 providers"/>
</dbReference>
<dbReference type="DNASU" id="20843"/>
<dbReference type="Ensembl" id="ENSMUST00000069619.14">
    <property type="protein sequence ID" value="ENSMUSP00000063250.8"/>
    <property type="gene ID" value="ENSMUSG00000025862.15"/>
</dbReference>
<dbReference type="Ensembl" id="ENSMUST00000115072.8">
    <property type="protein sequence ID" value="ENSMUSP00000110724.2"/>
    <property type="gene ID" value="ENSMUSG00000025862.15"/>
</dbReference>
<dbReference type="GeneID" id="20843"/>
<dbReference type="KEGG" id="mmu:20843"/>
<dbReference type="UCSC" id="uc009tax.2">
    <property type="organism name" value="mouse"/>
</dbReference>
<dbReference type="AGR" id="MGI:1098583"/>
<dbReference type="CTD" id="10735"/>
<dbReference type="MGI" id="MGI:1098583">
    <property type="gene designation" value="Stag2"/>
</dbReference>
<dbReference type="VEuPathDB" id="HostDB:ENSMUSG00000025862"/>
<dbReference type="eggNOG" id="KOG2011">
    <property type="taxonomic scope" value="Eukaryota"/>
</dbReference>
<dbReference type="GeneTree" id="ENSGT00950000182972"/>
<dbReference type="HOGENOM" id="CLU_005067_1_0_1"/>
<dbReference type="InParanoid" id="O35638"/>
<dbReference type="OMA" id="FGWMLND"/>
<dbReference type="OrthoDB" id="498590at2759"/>
<dbReference type="TreeFam" id="TF314604"/>
<dbReference type="Reactome" id="R-MMU-2467813">
    <property type="pathway name" value="Separation of Sister Chromatids"/>
</dbReference>
<dbReference type="Reactome" id="R-MMU-2468052">
    <property type="pathway name" value="Establishment of Sister Chromatid Cohesion"/>
</dbReference>
<dbReference type="Reactome" id="R-MMU-2470946">
    <property type="pathway name" value="Cohesin Loading onto Chromatin"/>
</dbReference>
<dbReference type="Reactome" id="R-MMU-2500257">
    <property type="pathway name" value="Resolution of Sister Chromatid Cohesion"/>
</dbReference>
<dbReference type="Reactome" id="R-MMU-3108214">
    <property type="pathway name" value="SUMOylation of DNA damage response and repair proteins"/>
</dbReference>
<dbReference type="BioGRID-ORCS" id="20843">
    <property type="hits" value="9 hits in 84 CRISPR screens"/>
</dbReference>
<dbReference type="ChiTaRS" id="Stag2">
    <property type="organism name" value="mouse"/>
</dbReference>
<dbReference type="PRO" id="PR:O35638"/>
<dbReference type="Proteomes" id="UP000000589">
    <property type="component" value="Chromosome X"/>
</dbReference>
<dbReference type="RNAct" id="O35638">
    <property type="molecule type" value="protein"/>
</dbReference>
<dbReference type="Bgee" id="ENSMUSG00000025862">
    <property type="expression patterns" value="Expressed in vestibular membrane of cochlear duct and 260 other cell types or tissues"/>
</dbReference>
<dbReference type="ExpressionAtlas" id="O35638">
    <property type="expression patterns" value="baseline and differential"/>
</dbReference>
<dbReference type="GO" id="GO:0000785">
    <property type="term" value="C:chromatin"/>
    <property type="evidence" value="ECO:0000314"/>
    <property type="project" value="MGI"/>
</dbReference>
<dbReference type="GO" id="GO:0000775">
    <property type="term" value="C:chromosome, centromeric region"/>
    <property type="evidence" value="ECO:0007669"/>
    <property type="project" value="UniProtKB-SubCell"/>
</dbReference>
<dbReference type="GO" id="GO:0008278">
    <property type="term" value="C:cohesin complex"/>
    <property type="evidence" value="ECO:0000250"/>
    <property type="project" value="UniProtKB"/>
</dbReference>
<dbReference type="GO" id="GO:0005654">
    <property type="term" value="C:nucleoplasm"/>
    <property type="evidence" value="ECO:0000304"/>
    <property type="project" value="Reactome"/>
</dbReference>
<dbReference type="GO" id="GO:0003682">
    <property type="term" value="F:chromatin binding"/>
    <property type="evidence" value="ECO:0000314"/>
    <property type="project" value="MGI"/>
</dbReference>
<dbReference type="GO" id="GO:0051301">
    <property type="term" value="P:cell division"/>
    <property type="evidence" value="ECO:0007669"/>
    <property type="project" value="UniProtKB-KW"/>
</dbReference>
<dbReference type="GO" id="GO:0007059">
    <property type="term" value="P:chromosome segregation"/>
    <property type="evidence" value="ECO:0007669"/>
    <property type="project" value="UniProtKB-KW"/>
</dbReference>
<dbReference type="GO" id="GO:0051321">
    <property type="term" value="P:meiotic cell cycle"/>
    <property type="evidence" value="ECO:0007669"/>
    <property type="project" value="UniProtKB-KW"/>
</dbReference>
<dbReference type="GO" id="GO:0007062">
    <property type="term" value="P:sister chromatid cohesion"/>
    <property type="evidence" value="ECO:0000250"/>
    <property type="project" value="UniProtKB"/>
</dbReference>
<dbReference type="GO" id="GO:0019827">
    <property type="term" value="P:stem cell population maintenance"/>
    <property type="evidence" value="ECO:0000315"/>
    <property type="project" value="MGI"/>
</dbReference>
<dbReference type="InterPro" id="IPR016024">
    <property type="entry name" value="ARM-type_fold"/>
</dbReference>
<dbReference type="InterPro" id="IPR039662">
    <property type="entry name" value="Cohesin_Scc3/SA"/>
</dbReference>
<dbReference type="InterPro" id="IPR056396">
    <property type="entry name" value="HEAT_SCC3-SA"/>
</dbReference>
<dbReference type="InterPro" id="IPR020839">
    <property type="entry name" value="SCD"/>
</dbReference>
<dbReference type="InterPro" id="IPR013721">
    <property type="entry name" value="STAG"/>
</dbReference>
<dbReference type="PANTHER" id="PTHR11199:SF3">
    <property type="entry name" value="COHESIN SUBUNIT SA-2"/>
    <property type="match status" value="1"/>
</dbReference>
<dbReference type="PANTHER" id="PTHR11199">
    <property type="entry name" value="STROMAL ANTIGEN"/>
    <property type="match status" value="1"/>
</dbReference>
<dbReference type="Pfam" id="PF24571">
    <property type="entry name" value="HEAT_SCC3-SA"/>
    <property type="match status" value="1"/>
</dbReference>
<dbReference type="Pfam" id="PF21581">
    <property type="entry name" value="SCD"/>
    <property type="match status" value="1"/>
</dbReference>
<dbReference type="Pfam" id="PF08514">
    <property type="entry name" value="STAG"/>
    <property type="match status" value="1"/>
</dbReference>
<dbReference type="SUPFAM" id="SSF48371">
    <property type="entry name" value="ARM repeat"/>
    <property type="match status" value="1"/>
</dbReference>
<dbReference type="PROSITE" id="PS51425">
    <property type="entry name" value="SCD"/>
    <property type="match status" value="1"/>
</dbReference>
<comment type="function">
    <text evidence="1">Component of cohesin complex, a complex required for the cohesion of sister chromatids after DNA replication. The cohesin complex apparently forms a large proteinaceous ring within which sister chromatids can be trapped. At anaphase, the complex is cleaved and dissociates from chromatin, allowing sister chromatids to segregate. The cohesin complex may also play a role in spindle pole assembly during mitosis (By similarity).</text>
</comment>
<comment type="subunit">
    <text evidence="1">Interacts directly with RAD21 in cohesin complex. Cohesin complexes are composed of a heterodimer between a SMC1 protein (SMC1A or SMC1B) and SMC3, which are attached via their hinge domain, and RAD21 which link them at their heads, and one STAG protein (STAG1, STAG2 or STAG3). In cohesin complexes, STAG2 is mutually exclusive with STAG1 and STAG3 (By similarity).</text>
</comment>
<comment type="subcellular location">
    <subcellularLocation>
        <location>Nucleus</location>
    </subcellularLocation>
    <subcellularLocation>
        <location evidence="1">Chromosome</location>
    </subcellularLocation>
    <subcellularLocation>
        <location evidence="1">Chromosome</location>
        <location evidence="1">Centromere</location>
    </subcellularLocation>
    <text evidence="1">Associates with chromatin. Before prophase it is scattered along chromosome arms. During prophase, most of cohesin complexes dissociate from chromatin probably because of phosphorylation by PLK1, except at centromeres, where cohesin complexes remain. At anaphase, the RAD21 subunit of cohesin is cleaved, leading to the dissociation of the complex from chromosomes, allowing chromosome separation. In germ cells, cohesin complex dissociates from chromatin at prophase I, and may be replaced by a meiosis-specific cohesin complex (By similarity).</text>
</comment>
<comment type="PTM">
    <text evidence="1">Phosphorylated by PLK1. The large dissociation of cohesin from chromosome arms during prophase is partly due to its phosphorylation (By similarity).</text>
</comment>
<comment type="similarity">
    <text evidence="5">Belongs to the SCC3 family.</text>
</comment>
<comment type="sequence caution" evidence="5">
    <conflict type="frameshift">
        <sequence resource="EMBL" id="BC066041"/>
    </conflict>
</comment>
<comment type="sequence caution" evidence="5">
    <conflict type="frameshift">
        <sequence resource="EMBL-CDS" id="CAA05638"/>
    </conflict>
</comment>
<accession>O35638</accession>
<accession>A2AFF5</accession>
<accession>Q6NZN7</accession>
<evidence type="ECO:0000250" key="1"/>
<evidence type="ECO:0000250" key="2">
    <source>
        <dbReference type="UniProtKB" id="Q8N3U4"/>
    </source>
</evidence>
<evidence type="ECO:0000255" key="3">
    <source>
        <dbReference type="PROSITE-ProRule" id="PRU00750"/>
    </source>
</evidence>
<evidence type="ECO:0000256" key="4">
    <source>
        <dbReference type="SAM" id="MobiDB-lite"/>
    </source>
</evidence>
<evidence type="ECO:0000305" key="5"/>
<evidence type="ECO:0007744" key="6">
    <source>
    </source>
</evidence>
<reference key="1">
    <citation type="submission" date="1997-11" db="EMBL/GenBank/DDBJ databases">
        <title>Homologue to human nuclear protein SA2.</title>
        <authorList>
            <person name="Barbero J.L."/>
            <person name="Carreiro C."/>
        </authorList>
    </citation>
    <scope>NUCLEOTIDE SEQUENCE [MRNA]</scope>
    <source>
        <tissue>Lung</tissue>
    </source>
</reference>
<reference key="2">
    <citation type="journal article" date="2009" name="PLoS Biol.">
        <title>Lineage-specific biology revealed by a finished genome assembly of the mouse.</title>
        <authorList>
            <person name="Church D.M."/>
            <person name="Goodstadt L."/>
            <person name="Hillier L.W."/>
            <person name="Zody M.C."/>
            <person name="Goldstein S."/>
            <person name="She X."/>
            <person name="Bult C.J."/>
            <person name="Agarwala R."/>
            <person name="Cherry J.L."/>
            <person name="DiCuccio M."/>
            <person name="Hlavina W."/>
            <person name="Kapustin Y."/>
            <person name="Meric P."/>
            <person name="Maglott D."/>
            <person name="Birtle Z."/>
            <person name="Marques A.C."/>
            <person name="Graves T."/>
            <person name="Zhou S."/>
            <person name="Teague B."/>
            <person name="Potamousis K."/>
            <person name="Churas C."/>
            <person name="Place M."/>
            <person name="Herschleb J."/>
            <person name="Runnheim R."/>
            <person name="Forrest D."/>
            <person name="Amos-Landgraf J."/>
            <person name="Schwartz D.C."/>
            <person name="Cheng Z."/>
            <person name="Lindblad-Toh K."/>
            <person name="Eichler E.E."/>
            <person name="Ponting C.P."/>
        </authorList>
    </citation>
    <scope>NUCLEOTIDE SEQUENCE [LARGE SCALE GENOMIC DNA]</scope>
    <source>
        <strain>C57BL/6J</strain>
    </source>
</reference>
<reference key="3">
    <citation type="journal article" date="2004" name="Genome Res.">
        <title>The status, quality, and expansion of the NIH full-length cDNA project: the Mammalian Gene Collection (MGC).</title>
        <authorList>
            <consortium name="The MGC Project Team"/>
        </authorList>
    </citation>
    <scope>NUCLEOTIDE SEQUENCE [LARGE SCALE MRNA]</scope>
    <source>
        <strain>C57BL/6J</strain>
        <tissue>Brain</tissue>
    </source>
</reference>
<reference key="4">
    <citation type="journal article" date="2007" name="Proc. Natl. Acad. Sci. U.S.A.">
        <title>Large-scale phosphorylation analysis of mouse liver.</title>
        <authorList>
            <person name="Villen J."/>
            <person name="Beausoleil S.A."/>
            <person name="Gerber S.A."/>
            <person name="Gygi S.P."/>
        </authorList>
    </citation>
    <scope>IDENTIFICATION BY MASS SPECTROMETRY [LARGE SCALE ANALYSIS]</scope>
    <source>
        <tissue>Liver</tissue>
    </source>
</reference>
<reference key="5">
    <citation type="journal article" date="2010" name="Cell">
        <title>A tissue-specific atlas of mouse protein phosphorylation and expression.</title>
        <authorList>
            <person name="Huttlin E.L."/>
            <person name="Jedrychowski M.P."/>
            <person name="Elias J.E."/>
            <person name="Goswami T."/>
            <person name="Rad R."/>
            <person name="Beausoleil S.A."/>
            <person name="Villen J."/>
            <person name="Haas W."/>
            <person name="Sowa M.E."/>
            <person name="Gygi S.P."/>
        </authorList>
    </citation>
    <scope>PHOSPHORYLATION [LARGE SCALE ANALYSIS] AT SER-1058; SER-1061; SER-1064 AND SER-1065</scope>
    <scope>IDENTIFICATION BY MASS SPECTROMETRY [LARGE SCALE ANALYSIS]</scope>
    <source>
        <tissue>Brain</tissue>
        <tissue>Brown adipose tissue</tissue>
        <tissue>Heart</tissue>
        <tissue>Kidney</tissue>
        <tissue>Liver</tissue>
        <tissue>Lung</tissue>
        <tissue>Pancreas</tissue>
        <tissue>Spleen</tissue>
        <tissue>Testis</tissue>
    </source>
</reference>
<sequence>MIAAPEIPTDFNLLQESETHFSSDTDFEDIEGKNQKQGKGKTCKKGKKGPAEKGKSGNGGGKPPSGSNRMNGHHQQNGVENMMLFEVVKMGKSAMQSVVDDWIESYKHDRDIALLDLINFFIQCSGCKGVVTAEMFRHMQNSEIIRKMTEEFDEDSGDYPLTMAGPQWKKFKSSFCEFIGVLVRQCQYSIIYDEYMMDTVISLLTGLSDSQVRAFRHTSTLAAMKLMTALVNVALNLSINMDNTQRQYEAERNKMIGKRANERLELLLQKRKELQENQDEIENMMNAIFKGVFVHRYRDAIAEIRAICIEEIGIWMKMYSDAFLNDSYLKYVGWTMHDKQGEVRLKCLTALQGLYYNKELNSKLELFTSRFKDRIVSMTLDKEYDVAVQAIKLLTLVLQSSEEVLTAEDCENVYHLVYSAHRPVAVAAGEFLYKKLFSRRDPEEDGLMKRRGRQGPNANLVKTLVFFFLESELHEHAAYLVDSMWDCATELLKDWECMNSLLLEEPLSGEEALTDRQESALIEIMLCTIRQAAECHPPVGRGTGKRVLTAKEKKTQLDDRTRITELFAVALPQLLAKYSVDAEKVTNLLQLPQYFDLEIYTTGRLEKHLDALLRQIRNIVEKHTDTDVLEACSKTYHALCNEEFTIFNRVDISRSQLIDELADKFNRLLEDFLQEGEEPDEDDAYQVLSTLKRITAFHNAHDLSKWDLFACNYKLLKTGIENGDMPEQIVIHALQCAHYVILWQLAKITESTSTKEDLLRLKKQMRVFCQICQHYLTNVNTTVKEQAFTILCDILMIFSHQIMSGGRDMLEPLVYTPDSSLQSELLSFILDHVFIEQDDDSNSADGQQEDEASKIEALHKRRNLLAAFCKLIVYTVVEMNTAADIFKQYMKYYNDYGDIIKETMSKTRQIDKIQCAKTLILSLQQLFNEMIQENGYNFDRSSSTFSGIKELARRFALTFGLDQLKTREAIAMLHKDGIEFAFKEPNPQGESHPPLNLAFLDILSEFSSKLLRQDKRTVYVYLEKFMTFQMSLRREDVWLPLMSYRNSLLAGGDDDTMSVISGMSSRGSTVRSKKSKPSTGKRKVVEGMQLALPEESSSSDSMWLSREQTLHTPVMMQTPQLTSTIMREPKRLRPEDSFMSVYPMQAEHHQTPLDYNRRGTSLMEDDEEPIVEDVMMSSEGRIEDLNEGMDFDTMDIDLPPSKNRRERTELKPDFFDPASIMDESVLGVSMF</sequence>
<feature type="chain" id="PRO_0000120186" description="Cohesin subunit SA-2">
    <location>
        <begin position="1"/>
        <end position="1231"/>
    </location>
</feature>
<feature type="domain" description="SCD" evidence="3">
    <location>
        <begin position="293"/>
        <end position="378"/>
    </location>
</feature>
<feature type="region of interest" description="Disordered" evidence="4">
    <location>
        <begin position="1"/>
        <end position="75"/>
    </location>
</feature>
<feature type="region of interest" description="Disordered" evidence="4">
    <location>
        <begin position="1062"/>
        <end position="1087"/>
    </location>
</feature>
<feature type="compositionally biased region" description="Basic residues" evidence="4">
    <location>
        <begin position="36"/>
        <end position="48"/>
    </location>
</feature>
<feature type="compositionally biased region" description="Basic residues" evidence="4">
    <location>
        <begin position="1071"/>
        <end position="1082"/>
    </location>
</feature>
<feature type="modified residue" description="N-acetylmethionine" evidence="2">
    <location>
        <position position="1"/>
    </location>
</feature>
<feature type="modified residue" description="N6-acetyllysine" evidence="2">
    <location>
        <position position="607"/>
    </location>
</feature>
<feature type="modified residue" description="Phosphoserine" evidence="6">
    <location>
        <position position="1058"/>
    </location>
</feature>
<feature type="modified residue" description="Phosphoserine" evidence="6">
    <location>
        <position position="1061"/>
    </location>
</feature>
<feature type="modified residue" description="Phosphoserine" evidence="6">
    <location>
        <position position="1064"/>
    </location>
</feature>
<feature type="modified residue" description="Phosphoserine" evidence="6">
    <location>
        <position position="1065"/>
    </location>
</feature>
<feature type="modified residue" description="Phosphothreonine" evidence="2">
    <location>
        <position position="1112"/>
    </location>
</feature>
<feature type="modified residue" description="Phosphoserine" evidence="2">
    <location>
        <position position="1177"/>
    </location>
</feature>
<feature type="modified residue" description="Phosphoserine" evidence="2">
    <location>
        <position position="1178"/>
    </location>
</feature>
<feature type="sequence conflict" description="In Ref. 1; CAA05638." evidence="5" ref="1">
    <original>P</original>
    <variation>Q</variation>
    <location>
        <position position="8"/>
    </location>
</feature>
<feature type="sequence conflict" description="In Ref. 1; CAA05638." evidence="5" ref="1">
    <original>N</original>
    <variation>I</variation>
    <location>
        <position position="34"/>
    </location>
</feature>
<feature type="sequence conflict" description="In Ref. 1; CAA05638." evidence="5" ref="1">
    <original>D</original>
    <variation>Y</variation>
    <location>
        <position position="299"/>
    </location>
</feature>
<feature type="sequence conflict" description="In Ref. 1; CAA05638." evidence="5" ref="1">
    <original>KH</original>
    <variation>ND</variation>
    <location>
        <begin position="607"/>
        <end position="608"/>
    </location>
</feature>
<feature type="sequence conflict" description="In Ref. 1; CAA05638." evidence="5" ref="1">
    <original>T</original>
    <variation>S</variation>
    <location>
        <position position="881"/>
    </location>
</feature>
<feature type="sequence conflict" description="In Ref. 1; CAA05638." evidence="5" ref="1">
    <original>L</original>
    <variation>F</variation>
    <location>
        <position position="951"/>
    </location>
</feature>
<proteinExistence type="evidence at protein level"/>